<accession>Q91YM2</accession>
<accession>Q3UGY1</accession>
<accession>Q69ZC4</accession>
<protein>
    <recommendedName>
        <fullName evidence="18">Rho GTPase-activating protein 35</fullName>
    </recommendedName>
    <alternativeName>
        <fullName>Glucocorticoid receptor DNA-binding factor 1</fullName>
    </alternativeName>
</protein>
<comment type="function">
    <text evidence="4 9 10 11 12 14 15">Rho GTPase-activating protein (GAP). Binds several acidic phospholipids which inhibits the Rho GAP activity to promote the Rac GAP activity (PubMed:16971514). This binding is inhibited by phosphorylation by PRKCA (By similarity). Involved in cell differentiation as well as cell adhesion and migration, plays an important role in retinal tissue morphogenesis, neural tube fusion, midline fusion of the cerebral hemispheres and mammary gland branching morphogenesis (PubMed:11044403, PubMed:11283609, PubMed:18502760, PubMed:21945077). Transduces signals from p21-ras to the nucleus, acting via the ras GTPase-activating protein (GAP) (PubMed:16971514). Transduces SRC-dependent signals from cell-surface adhesion molecules, such as laminin, to promote neurite outgrowth. Regulates axon outgrowth, guidance and fasciculation (PubMed:11283609). Modulates Rho GTPase-dependent F-actin polymerization, organization and assembly, is involved in polarized cell migration and in the positive regulation of ciliogenesis and cilia elongation (PubMed:11044403, PubMed:18502760, PubMed:26859289). During mammary gland development, is required in both the epithelial and stromal compartments for ductal outgrowth (PubMed:21945077). Represses transcription of the glucocorticoid receptor by binding to the cis-acting regulatory sequence 5'-GAGAAAAGAAACTGGAGAAACTC-3'; this function is however unclear and would need additional experimental evidences (By similarity).</text>
</comment>
<comment type="subunit">
    <text evidence="1 11">Interacts with the general transcription factor GTF2I, the interaction sequesters GTF2I in the cytoplasm (By similarity). Interacts with RASA1 (PubMed:16971514).</text>
</comment>
<comment type="subcellular location">
    <subcellularLocation>
        <location evidence="15">Cytoplasm</location>
        <location evidence="15">Cytoskeleton</location>
        <location evidence="15">Cilium basal body</location>
    </subcellularLocation>
    <subcellularLocation>
        <location evidence="9">Cytoplasm</location>
    </subcellularLocation>
    <subcellularLocation>
        <location evidence="17">Nucleus</location>
    </subcellularLocation>
    <subcellularLocation>
        <location evidence="9">Cell membrane</location>
    </subcellularLocation>
    <text evidence="9">In response to integrins and SDC4 and upon phosphorylation by PKC, relocalizes from the cytoplasm to regions of plasma membrane ruffling where it colocalizes with polymerized actin.</text>
</comment>
<comment type="tissue specificity">
    <text evidence="9 13 15">Expressed in the developing kidneys (PubMed:26859289). Expressed in all regions of the mature nervous system (at protein level) (PubMed:11044403). Detected in neutrophils (at protein level) (PubMed:20675588).</text>
</comment>
<comment type="developmental stage">
    <text evidence="9 14 15">At 12.5 dpc, the highest level of expression is in the spinal cord and lower expression levels are seen in the developing brain. At 15.5 dpc, highly expressed in brain, spinal cord and eyes (PubMed:11044403). In developing kidney, at 17.5 dpc, low expression is observed in the glomerulus, while high expression levels are detected in the proximal tubule (PubMed:26859289). At 14.5 dpc, is expressed within the epithelial compartment of the embryonic mammary bud and at lower level in the surrounding stroma and skin. Also expressed at terminal end bunds (TEB) at comparable levels in body and cap cells as well as in fibroblasts and stroma surrounding the TEB (PubMed:21945077).</text>
</comment>
<comment type="domain">
    <text evidence="9 10">N-terminal part (1-266) has GTPase activity. Required for proper cellular localization. Mutation of this region is a severely defective loss of function. Mutants have defective morphogenesis of neural retinal tissue, agenesis of the corpus callosum due to defectuous midline fusion of the cerebral hemispheres (PubMed:11044403). Mutants show defects in axon guidance and fasciculation (PubMed:11283609).</text>
</comment>
<comment type="domain">
    <text evidence="3">The pG1 pseudoGTPase domain does not bind GTP.</text>
</comment>
<comment type="PTM">
    <text evidence="2 4 9 10 12">Phosphorylation of Tyr-1105 by PTK6 promotes the association with RASA1, inactivating RHOA while activating RAS. Phosphorylation at Tyr-308 by PDGFRA inhibits binding to GTF2I (By similarity). Phosphorylated by PRKCA at Ser-1221 and Thr-1226, induces relocalization from the cytoplasm to regions of plasma membrane ruffling and prevents the binding and substrate specificity regulation by phospholipids (PubMed:11044403). In brain, phosphorylated by FYN and SRC (PubMed:11283609). During focal adhesion formation, phosphorylated by MAPK1 and MAPK3 at the C-terminal region, probably at Ser-1451, Ser-1476, Thr-1480 and Ser-1483. Phosphorylation by MAPK1 and MAPK3 inhibits GAP function and localizes ARGHAP35 away from newly forming focal adhesions and stress fibers in cells spreading on fibronectin (By similarity). Phosphorylation at Ser-1476 and Thr-1480 by GSK3B requires priming by MAPK and inhibits RhoGAP activity and modulates polarized cell migration (PubMed:18502760).</text>
</comment>
<comment type="disruption phenotype">
    <text evidence="13">Deficiency leads to perinatal lethality and defective neural development. One third of the fetuses show exencephaly and spina bifida as well as defective kidney development.</text>
</comment>
<gene>
    <name evidence="18" type="primary">Arhgap35</name>
    <name type="synonym">Grlf1</name>
    <name type="synonym">Kiaa1722</name>
    <name evidence="16" type="synonym">P190A</name>
    <name evidence="16" type="synonym">p190ARHOGAP</name>
</gene>
<proteinExistence type="evidence at protein level"/>
<feature type="chain" id="PRO_0000056731" description="Rho GTPase-activating protein 35">
    <location>
        <begin position="1"/>
        <end position="1499"/>
    </location>
</feature>
<feature type="domain" description="FF 1">
    <location>
        <begin position="270"/>
        <end position="327"/>
    </location>
</feature>
<feature type="domain" description="FF 2">
    <location>
        <begin position="368"/>
        <end position="422"/>
    </location>
</feature>
<feature type="domain" description="FF 3">
    <location>
        <begin position="429"/>
        <end position="483"/>
    </location>
</feature>
<feature type="domain" description="FF 4">
    <location>
        <begin position="485"/>
        <end position="550"/>
    </location>
</feature>
<feature type="domain" description="pG1 pseudoGTPase" evidence="6">
    <location>
        <begin position="592"/>
        <end position="767"/>
    </location>
</feature>
<feature type="domain" description="pG2 pseudoGTPase" evidence="7">
    <location>
        <begin position="783"/>
        <end position="947"/>
    </location>
</feature>
<feature type="domain" description="Rho-GAP" evidence="5">
    <location>
        <begin position="1249"/>
        <end position="1436"/>
    </location>
</feature>
<feature type="region of interest" description="Has GTPase activity, required for proper localization" evidence="9">
    <location>
        <begin position="1"/>
        <end position="266"/>
    </location>
</feature>
<feature type="region of interest" description="Disordered" evidence="8">
    <location>
        <begin position="1124"/>
        <end position="1148"/>
    </location>
</feature>
<feature type="region of interest" description="Disordered" evidence="8">
    <location>
        <begin position="1177"/>
        <end position="1207"/>
    </location>
</feature>
<feature type="region of interest" description="Required for phospholipid binding and regulation of the substrate preference" evidence="4">
    <location>
        <begin position="1213"/>
        <end position="1236"/>
    </location>
</feature>
<feature type="region of interest" description="Disordered" evidence="8">
    <location>
        <begin position="1446"/>
        <end position="1499"/>
    </location>
</feature>
<feature type="compositionally biased region" description="Polar residues" evidence="8">
    <location>
        <begin position="1124"/>
        <end position="1141"/>
    </location>
</feature>
<feature type="compositionally biased region" description="Low complexity" evidence="8">
    <location>
        <begin position="1448"/>
        <end position="1470"/>
    </location>
</feature>
<feature type="compositionally biased region" description="Pro residues" evidence="8">
    <location>
        <begin position="1471"/>
        <end position="1484"/>
    </location>
</feature>
<feature type="compositionally biased region" description="Low complexity" evidence="8">
    <location>
        <begin position="1485"/>
        <end position="1499"/>
    </location>
</feature>
<feature type="binding site" evidence="4">
    <location>
        <position position="28"/>
    </location>
    <ligand>
        <name>GTP</name>
        <dbReference type="ChEBI" id="CHEBI:37565"/>
    </ligand>
</feature>
<feature type="binding site" evidence="4">
    <location>
        <begin position="33"/>
        <end position="37"/>
    </location>
    <ligand>
        <name>GTP</name>
        <dbReference type="ChEBI" id="CHEBI:37565"/>
    </ligand>
</feature>
<feature type="binding site" evidence="4">
    <location>
        <position position="52"/>
    </location>
    <ligand>
        <name>GTP</name>
        <dbReference type="ChEBI" id="CHEBI:37565"/>
    </ligand>
</feature>
<feature type="binding site" evidence="4">
    <location>
        <position position="56"/>
    </location>
    <ligand>
        <name>GTP</name>
        <dbReference type="ChEBI" id="CHEBI:37565"/>
    </ligand>
</feature>
<feature type="binding site" evidence="4">
    <location>
        <begin position="95"/>
        <end position="97"/>
    </location>
    <ligand>
        <name>GTP</name>
        <dbReference type="ChEBI" id="CHEBI:37565"/>
    </ligand>
</feature>
<feature type="binding site" evidence="4">
    <location>
        <begin position="201"/>
        <end position="203"/>
    </location>
    <ligand>
        <name>GTP</name>
        <dbReference type="ChEBI" id="CHEBI:37565"/>
    </ligand>
</feature>
<feature type="binding site" evidence="4">
    <location>
        <begin position="229"/>
        <end position="231"/>
    </location>
    <ligand>
        <name>GTP</name>
        <dbReference type="ChEBI" id="CHEBI:37565"/>
    </ligand>
</feature>
<feature type="site" description="Arginine finger; crucial for GTP hydrolysis by stabilizing the transition state" evidence="5">
    <location>
        <position position="1284"/>
    </location>
</feature>
<feature type="modified residue" description="Phosphotyrosine" evidence="4">
    <location>
        <position position="308"/>
    </location>
</feature>
<feature type="modified residue" description="Phosphoserine" evidence="21">
    <location>
        <position position="589"/>
    </location>
</feature>
<feature type="modified residue" description="Phosphoserine" evidence="4">
    <location>
        <position position="770"/>
    </location>
</feature>
<feature type="modified residue" description="Phosphoserine" evidence="21">
    <location>
        <position position="773"/>
    </location>
</feature>
<feature type="modified residue" description="Phosphoserine" evidence="21">
    <location>
        <position position="970"/>
    </location>
</feature>
<feature type="modified residue" description="Phosphoserine" evidence="21">
    <location>
        <position position="975"/>
    </location>
</feature>
<feature type="modified residue" description="Phosphoserine" evidence="21">
    <location>
        <position position="985"/>
    </location>
</feature>
<feature type="modified residue" description="Phosphoserine" evidence="4">
    <location>
        <position position="1072"/>
    </location>
</feature>
<feature type="modified residue" description="Phosphotyrosine" evidence="21">
    <location>
        <position position="1087"/>
    </location>
</feature>
<feature type="modified residue" description="Phosphotyrosine; by ABL2 and PTK6" evidence="11 19 20 21">
    <location>
        <position position="1105"/>
    </location>
</feature>
<feature type="modified residue" description="Phosphoserine" evidence="21">
    <location>
        <position position="1134"/>
    </location>
</feature>
<feature type="modified residue" description="Phosphoserine" evidence="21">
    <location>
        <position position="1142"/>
    </location>
</feature>
<feature type="modified residue" description="Phosphoserine" evidence="4">
    <location>
        <position position="1150"/>
    </location>
</feature>
<feature type="modified residue" description="Phosphoserine" evidence="4">
    <location>
        <position position="1176"/>
    </location>
</feature>
<feature type="modified residue" description="Phosphoserine" evidence="21">
    <location>
        <position position="1179"/>
    </location>
</feature>
<feature type="modified residue" description="Phosphoserine" evidence="4">
    <location>
        <position position="1221"/>
    </location>
</feature>
<feature type="modified residue" description="Phosphothreonine" evidence="4">
    <location>
        <position position="1226"/>
    </location>
</feature>
<feature type="modified residue" description="Phosphoserine" evidence="4">
    <location>
        <position position="1236"/>
    </location>
</feature>
<feature type="modified residue" description="Phosphoserine" evidence="12">
    <location>
        <position position="1472"/>
    </location>
</feature>
<feature type="modified residue" description="Phosphoserine" evidence="12">
    <location>
        <position position="1476"/>
    </location>
</feature>
<feature type="modified residue" description="Phosphothreonine" evidence="12">
    <location>
        <position position="1480"/>
    </location>
</feature>
<feature type="modified residue" description="Phosphoserine" evidence="12">
    <location>
        <position position="1483"/>
    </location>
</feature>
<feature type="mutagenesis site" description="In ENU mutant Arhgap35-D34; mutant animals show hypodysplastic kidneys and neural tube closure defects; the number of ciliated cells and cilia average length are drastically reduced in the proximal tubules. Results in loss of activation of GTP hydrolysis." evidence="15">
    <original>L</original>
    <variation>Q</variation>
    <location>
        <position position="1396"/>
    </location>
</feature>
<feature type="mutagenesis site" description="Reduces phosphorylation by GSK3B by 50%. No effect on polarized cell migration." evidence="12">
    <original>S</original>
    <variation>A</variation>
    <location>
        <position position="1472"/>
    </location>
</feature>
<feature type="mutagenesis site" description="Abolishes phosphorylation by GSK3B. Reduces phosphorylation by MAPK. Affects polarized cell migration. Increases RhoGAP catalytic activity." evidence="12">
    <original>S</original>
    <variation>A</variation>
    <location>
        <position position="1476"/>
    </location>
</feature>
<feature type="mutagenesis site" description="Abolishes phosphorylation by GSK3B. Reduces phosphorylation by MAPK. Affects polarized cell migration. Increases RhoGAP catalytic activity." evidence="12">
    <original>T</original>
    <variation>A</variation>
    <location>
        <position position="1480"/>
    </location>
</feature>
<feature type="mutagenesis site" description="Abolishes phosphorylation by GSK3B. Reduces phosphorylation by MAPK. No effect on polarized cell migration." evidence="12">
    <original>S</original>
    <variation>A</variation>
    <location>
        <position position="1483"/>
    </location>
</feature>
<sequence length="1499" mass="170393">MMMARKQDVRIPTYNISVVGLSGTEKEKGQCGIGKSCLCNRFVRPSADEFHLDHTSVLSTSDFGGRVVNNDHFLYWGEVSRSLEDCVECKMHIVEQTEFIDDQTFQPHRSTALQPYIKRAAATKLASAEKLMYFCTDQLGLEQDFEQKQMPDGKLLVDGFLLGIDVSRGMNRNFDDQLKFVSNLYNQLAKTKKPIVVVLTKCDEGVERYIRDAHTFALSKKNLQVVETSARSNVNVDLAFSTLVQLIDKSRGKTKIIPYFEALKQQSQQIATAKDKYEWLVSRIVKNHNENWPSVSRKMQASPEYQDYVYLEGTQKAKKLFLQHIHRLKHEHIERRRKLYLAALPLAFEALIPNLDEVDHLSCIKAKKLLETKPEFLKWFVVLEETPWDATSHIDNMENERIPFDLMDTVPAEQLYETHLEKLRNERKRAEMRRAFKENLETSPFITPGKPWEEARSFIMNEDFYQWLEESVYMDIYGKHQKQIIDRAKEEFQELLLEYSELFYELELDAKPSKEKMGVIQDVLGEEQRFKALQKLQAERDALILKHIHFVYHPTKETCPSCPACVDAKIEHLISSRFIRPSDRNQKNSLSDLNIDRINLVILGKDGLARELANEIRALCTNDDKYVIDGKMYELSLRPIEGNVRLPVNSFQTPTFQPHGCLCLYNSKESLSYVVESIEKSRESTLGRRDNHLVHLPLTLILVNKRGDTSGETLHSLIQQGQQIASKLQCVFLDPASAGIGYGRNINEKQISQVLKGLLDSKRNLNLVSSTASIKDLADVDLRIVMCLMCGDPFSADDVLSPVLQSQTCKSSHCGSSNSVLLELPIGLHKKRIELSVLSYHSSFSIRKSRLVHGYIVFYSAKRKASLAMLRAFLCEVQDIIPIQLVALTDGAIDVLDNDLSREQLTEGEEIAQEIDGRFTSIPCSQPQHKLELFHPFFKDVVEKKNIIEATHMYDNVAEACSTTEEVFNSPRAGSPLCNSNLQDSEEDVEPPSYHLFREDATLPSLSKDHSKFSMELEGNDGLSFIMSNFESKLNNKVPPPVKPKPPVHFDITKDLSYLDQGHREGQRKSMSSSPWMPQDGFDPSDYAEPMDAVVKPRNEEENIYSVPHDSTQGKIITIRNINKAQSNGSGNGSDSEMDTSSLERGRKVSAVSKPVLYRTRCTRLGRFASYRTSFSVGSDDELGPIRKKEEDQASQGYKGDNAVIPYETDEDPRRRNILRSLRRNTKKPKPKPRPSITKATWESNYFGVPLTTVVTPEKPIPIFIERCIEYIEATGLSTEGIYRVSGNKSEMESLQRQFDQDHNLDLAEKDFTVNTVAGAMKSFFSELPDPLVPYSMQIDLVEAHKINDREQKLHALKEVLKKFPKENHEVFKYVISHLNKVSHNNKVNLMTSENLSICFWPTLMRPDFSSMDALTATRSYQTIIELFIQQCPFFFYNRPISEPPGAAPGSPSAMAPTVPFLTSTPATSQPSPPQSPPPTPQSPMQPLLSSQLQAEHTL</sequence>
<keyword id="KW-1003">Cell membrane</keyword>
<keyword id="KW-0966">Cell projection</keyword>
<keyword id="KW-0963">Cytoplasm</keyword>
<keyword id="KW-0206">Cytoskeleton</keyword>
<keyword id="KW-0238">DNA-binding</keyword>
<keyword id="KW-0342">GTP-binding</keyword>
<keyword id="KW-0343">GTPase activation</keyword>
<keyword id="KW-0446">Lipid-binding</keyword>
<keyword id="KW-0472">Membrane</keyword>
<keyword id="KW-0547">Nucleotide-binding</keyword>
<keyword id="KW-0539">Nucleus</keyword>
<keyword id="KW-0597">Phosphoprotein</keyword>
<keyword id="KW-1185">Reference proteome</keyword>
<keyword id="KW-0677">Repeat</keyword>
<keyword id="KW-0678">Repressor</keyword>
<keyword id="KW-0804">Transcription</keyword>
<keyword id="KW-0805">Transcription regulation</keyword>
<reference key="1">
    <citation type="journal article" date="2005" name="Science">
        <title>The transcriptional landscape of the mammalian genome.</title>
        <authorList>
            <person name="Carninci P."/>
            <person name="Kasukawa T."/>
            <person name="Katayama S."/>
            <person name="Gough J."/>
            <person name="Frith M.C."/>
            <person name="Maeda N."/>
            <person name="Oyama R."/>
            <person name="Ravasi T."/>
            <person name="Lenhard B."/>
            <person name="Wells C."/>
            <person name="Kodzius R."/>
            <person name="Shimokawa K."/>
            <person name="Bajic V.B."/>
            <person name="Brenner S.E."/>
            <person name="Batalov S."/>
            <person name="Forrest A.R."/>
            <person name="Zavolan M."/>
            <person name="Davis M.J."/>
            <person name="Wilming L.G."/>
            <person name="Aidinis V."/>
            <person name="Allen J.E."/>
            <person name="Ambesi-Impiombato A."/>
            <person name="Apweiler R."/>
            <person name="Aturaliya R.N."/>
            <person name="Bailey T.L."/>
            <person name="Bansal M."/>
            <person name="Baxter L."/>
            <person name="Beisel K.W."/>
            <person name="Bersano T."/>
            <person name="Bono H."/>
            <person name="Chalk A.M."/>
            <person name="Chiu K.P."/>
            <person name="Choudhary V."/>
            <person name="Christoffels A."/>
            <person name="Clutterbuck D.R."/>
            <person name="Crowe M.L."/>
            <person name="Dalla E."/>
            <person name="Dalrymple B.P."/>
            <person name="de Bono B."/>
            <person name="Della Gatta G."/>
            <person name="di Bernardo D."/>
            <person name="Down T."/>
            <person name="Engstrom P."/>
            <person name="Fagiolini M."/>
            <person name="Faulkner G."/>
            <person name="Fletcher C.F."/>
            <person name="Fukushima T."/>
            <person name="Furuno M."/>
            <person name="Futaki S."/>
            <person name="Gariboldi M."/>
            <person name="Georgii-Hemming P."/>
            <person name="Gingeras T.R."/>
            <person name="Gojobori T."/>
            <person name="Green R.E."/>
            <person name="Gustincich S."/>
            <person name="Harbers M."/>
            <person name="Hayashi Y."/>
            <person name="Hensch T.K."/>
            <person name="Hirokawa N."/>
            <person name="Hill D."/>
            <person name="Huminiecki L."/>
            <person name="Iacono M."/>
            <person name="Ikeo K."/>
            <person name="Iwama A."/>
            <person name="Ishikawa T."/>
            <person name="Jakt M."/>
            <person name="Kanapin A."/>
            <person name="Katoh M."/>
            <person name="Kawasawa Y."/>
            <person name="Kelso J."/>
            <person name="Kitamura H."/>
            <person name="Kitano H."/>
            <person name="Kollias G."/>
            <person name="Krishnan S.P."/>
            <person name="Kruger A."/>
            <person name="Kummerfeld S.K."/>
            <person name="Kurochkin I.V."/>
            <person name="Lareau L.F."/>
            <person name="Lazarevic D."/>
            <person name="Lipovich L."/>
            <person name="Liu J."/>
            <person name="Liuni S."/>
            <person name="McWilliam S."/>
            <person name="Madan Babu M."/>
            <person name="Madera M."/>
            <person name="Marchionni L."/>
            <person name="Matsuda H."/>
            <person name="Matsuzawa S."/>
            <person name="Miki H."/>
            <person name="Mignone F."/>
            <person name="Miyake S."/>
            <person name="Morris K."/>
            <person name="Mottagui-Tabar S."/>
            <person name="Mulder N."/>
            <person name="Nakano N."/>
            <person name="Nakauchi H."/>
            <person name="Ng P."/>
            <person name="Nilsson R."/>
            <person name="Nishiguchi S."/>
            <person name="Nishikawa S."/>
            <person name="Nori F."/>
            <person name="Ohara O."/>
            <person name="Okazaki Y."/>
            <person name="Orlando V."/>
            <person name="Pang K.C."/>
            <person name="Pavan W.J."/>
            <person name="Pavesi G."/>
            <person name="Pesole G."/>
            <person name="Petrovsky N."/>
            <person name="Piazza S."/>
            <person name="Reed J."/>
            <person name="Reid J.F."/>
            <person name="Ring B.Z."/>
            <person name="Ringwald M."/>
            <person name="Rost B."/>
            <person name="Ruan Y."/>
            <person name="Salzberg S.L."/>
            <person name="Sandelin A."/>
            <person name="Schneider C."/>
            <person name="Schoenbach C."/>
            <person name="Sekiguchi K."/>
            <person name="Semple C.A."/>
            <person name="Seno S."/>
            <person name="Sessa L."/>
            <person name="Sheng Y."/>
            <person name="Shibata Y."/>
            <person name="Shimada H."/>
            <person name="Shimada K."/>
            <person name="Silva D."/>
            <person name="Sinclair B."/>
            <person name="Sperling S."/>
            <person name="Stupka E."/>
            <person name="Sugiura K."/>
            <person name="Sultana R."/>
            <person name="Takenaka Y."/>
            <person name="Taki K."/>
            <person name="Tammoja K."/>
            <person name="Tan S.L."/>
            <person name="Tang S."/>
            <person name="Taylor M.S."/>
            <person name="Tegner J."/>
            <person name="Teichmann S.A."/>
            <person name="Ueda H.R."/>
            <person name="van Nimwegen E."/>
            <person name="Verardo R."/>
            <person name="Wei C.L."/>
            <person name="Yagi K."/>
            <person name="Yamanishi H."/>
            <person name="Zabarovsky E."/>
            <person name="Zhu S."/>
            <person name="Zimmer A."/>
            <person name="Hide W."/>
            <person name="Bult C."/>
            <person name="Grimmond S.M."/>
            <person name="Teasdale R.D."/>
            <person name="Liu E.T."/>
            <person name="Brusic V."/>
            <person name="Quackenbush J."/>
            <person name="Wahlestedt C."/>
            <person name="Mattick J.S."/>
            <person name="Hume D.A."/>
            <person name="Kai C."/>
            <person name="Sasaki D."/>
            <person name="Tomaru Y."/>
            <person name="Fukuda S."/>
            <person name="Kanamori-Katayama M."/>
            <person name="Suzuki M."/>
            <person name="Aoki J."/>
            <person name="Arakawa T."/>
            <person name="Iida J."/>
            <person name="Imamura K."/>
            <person name="Itoh M."/>
            <person name="Kato T."/>
            <person name="Kawaji H."/>
            <person name="Kawagashira N."/>
            <person name="Kawashima T."/>
            <person name="Kojima M."/>
            <person name="Kondo S."/>
            <person name="Konno H."/>
            <person name="Nakano K."/>
            <person name="Ninomiya N."/>
            <person name="Nishio T."/>
            <person name="Okada M."/>
            <person name="Plessy C."/>
            <person name="Shibata K."/>
            <person name="Shiraki T."/>
            <person name="Suzuki S."/>
            <person name="Tagami M."/>
            <person name="Waki K."/>
            <person name="Watahiki A."/>
            <person name="Okamura-Oho Y."/>
            <person name="Suzuki H."/>
            <person name="Kawai J."/>
            <person name="Hayashizaki Y."/>
        </authorList>
    </citation>
    <scope>NUCLEOTIDE SEQUENCE [LARGE SCALE MRNA]</scope>
    <source>
        <strain>C57BL/6J</strain>
        <tissue>Brain</tissue>
    </source>
</reference>
<reference key="2">
    <citation type="journal article" date="2004" name="DNA Res.">
        <title>Prediction of the coding sequences of mouse homologues of KIAA gene: IV. The complete nucleotide sequences of 500 mouse KIAA-homologous cDNAs identified by screening of terminal sequences of cDNA clones randomly sampled from size-fractionated libraries.</title>
        <authorList>
            <person name="Okazaki N."/>
            <person name="Kikuno R."/>
            <person name="Ohara R."/>
            <person name="Inamoto S."/>
            <person name="Koseki H."/>
            <person name="Hiraoka S."/>
            <person name="Saga Y."/>
            <person name="Seino S."/>
            <person name="Nishimura M."/>
            <person name="Kaisho T."/>
            <person name="Hoshino K."/>
            <person name="Kitamura H."/>
            <person name="Nagase T."/>
            <person name="Ohara O."/>
            <person name="Koga H."/>
        </authorList>
    </citation>
    <scope>NUCLEOTIDE SEQUENCE [LARGE SCALE MRNA] OF 163-1499</scope>
    <source>
        <tissue>Brain</tissue>
    </source>
</reference>
<reference key="3">
    <citation type="journal article" date="2000" name="Development">
        <title>The adhesion signaling molecule p190 RhoGAP is required for morphogenetic processes in neural development.</title>
        <authorList>
            <person name="Brouns M.R."/>
            <person name="Matheson S.F."/>
            <person name="Hu K.Q."/>
            <person name="Delalle I."/>
            <person name="Caviness V.S."/>
            <person name="Silver J."/>
            <person name="Bronson R.T."/>
            <person name="Settleman J."/>
        </authorList>
    </citation>
    <scope>FUNCTION</scope>
    <scope>SUBCELLULAR LOCATION</scope>
    <scope>DEVELOPMENTAL STAGE</scope>
    <scope>TISSUE SPECIFICITY</scope>
    <scope>PHOSPHORYLATION BY PKC</scope>
    <scope>DOMAIN</scope>
</reference>
<reference key="4">
    <citation type="journal article" date="2001" name="Nat. Cell Biol.">
        <title>p190 RhoGAP is the principal Src substrate in brain and regulates axon outgrowth, guidance and fasciculation.</title>
        <authorList>
            <person name="Brouns M.R."/>
            <person name="Matheson S.F."/>
            <person name="Settleman J."/>
        </authorList>
    </citation>
    <scope>FUNCTION</scope>
    <scope>PHOSPHORYLATION BY SRC AND FYN</scope>
    <scope>DOMAIN</scope>
</reference>
<reference key="5">
    <citation type="journal article" date="2006" name="Mol. Biol. Cell">
        <title>Integrin signaling through Arg activates p190RhoGAP by promoting its binding to p120RasGAP and recruitment to the membrane.</title>
        <authorList>
            <person name="Bradley W.D."/>
            <person name="Hernandez S.E."/>
            <person name="Settleman J."/>
            <person name="Koleske A.J."/>
        </authorList>
    </citation>
    <scope>PHOSPHORYLATION AT TYR-1105</scope>
    <scope>INTERACTION WITH RASA1</scope>
    <scope>FUNCTION</scope>
</reference>
<reference key="6">
    <citation type="journal article" date="2006" name="Mol. Cell. Proteomics">
        <title>Comprehensive identification of phosphorylation sites in postsynaptic density preparations.</title>
        <authorList>
            <person name="Trinidad J.C."/>
            <person name="Specht C.G."/>
            <person name="Thalhammer A."/>
            <person name="Schoepfer R."/>
            <person name="Burlingame A.L."/>
        </authorList>
    </citation>
    <scope>IDENTIFICATION BY MASS SPECTROMETRY [LARGE SCALE ANALYSIS]</scope>
    <source>
        <tissue>Brain</tissue>
    </source>
</reference>
<reference key="7">
    <citation type="journal article" date="2007" name="J. Immunol.">
        <title>Quantitative time-resolved phosphoproteomic analysis of mast cell signaling.</title>
        <authorList>
            <person name="Cao L."/>
            <person name="Yu K."/>
            <person name="Banh C."/>
            <person name="Nguyen V."/>
            <person name="Ritz A."/>
            <person name="Raphael B.J."/>
            <person name="Kawakami Y."/>
            <person name="Kawakami T."/>
            <person name="Salomon A.R."/>
        </authorList>
    </citation>
    <scope>PHOSPHORYLATION [LARGE SCALE ANALYSIS] AT TYR-1105</scope>
    <scope>IDENTIFICATION BY MASS SPECTROMETRY [LARGE SCALE ANALYSIS]</scope>
    <source>
        <tissue>Mast cell</tissue>
    </source>
</reference>
<reference key="8">
    <citation type="journal article" date="2007" name="Proc. Natl. Acad. Sci. U.S.A.">
        <title>Large-scale phosphorylation analysis of mouse liver.</title>
        <authorList>
            <person name="Villen J."/>
            <person name="Beausoleil S.A."/>
            <person name="Gerber S.A."/>
            <person name="Gygi S.P."/>
        </authorList>
    </citation>
    <scope>IDENTIFICATION BY MASS SPECTROMETRY [LARGE SCALE ANALYSIS]</scope>
    <source>
        <tissue>Liver</tissue>
    </source>
</reference>
<reference key="9">
    <citation type="journal article" date="2008" name="J. Biol. Chem.">
        <title>p190A RhoGAP is a glycogen synthase kinase-3-beta substrate required for polarized cell migration.</title>
        <authorList>
            <person name="Jiang W."/>
            <person name="Betson M."/>
            <person name="Mulloy R."/>
            <person name="Foster R."/>
            <person name="Levay M."/>
            <person name="Ligeti E."/>
            <person name="Settleman J."/>
        </authorList>
    </citation>
    <scope>FUNCTION</scope>
    <scope>PHOSPHORYLATION AT SER-1472; SER-1476; THR-1480 AND SER-1483</scope>
    <scope>MUTAGENESIS OF SER-1472; SER-1476; THR-1480 AND SER-1483</scope>
</reference>
<reference key="10">
    <citation type="journal article" date="2008" name="J. Proteome Res.">
        <title>Large-scale identification and evolution indexing of tyrosine phosphorylation sites from murine brain.</title>
        <authorList>
            <person name="Ballif B.A."/>
            <person name="Carey G.R."/>
            <person name="Sunyaev S.R."/>
            <person name="Gygi S.P."/>
        </authorList>
    </citation>
    <scope>PHOSPHORYLATION [LARGE SCALE ANALYSIS] AT TYR-1105</scope>
    <scope>IDENTIFICATION BY MASS SPECTROMETRY [LARGE SCALE ANALYSIS]</scope>
    <source>
        <tissue>Brain</tissue>
    </source>
</reference>
<reference key="11">
    <citation type="journal article" date="2010" name="Cell">
        <title>A tissue-specific atlas of mouse protein phosphorylation and expression.</title>
        <authorList>
            <person name="Huttlin E.L."/>
            <person name="Jedrychowski M.P."/>
            <person name="Elias J.E."/>
            <person name="Goswami T."/>
            <person name="Rad R."/>
            <person name="Beausoleil S.A."/>
            <person name="Villen J."/>
            <person name="Haas W."/>
            <person name="Sowa M.E."/>
            <person name="Gygi S.P."/>
        </authorList>
    </citation>
    <scope>PHOSPHORYLATION [LARGE SCALE ANALYSIS] AT SER-589; SER-773; SER-970; SER-975; SER-985; TYR-1087; TYR-1105; SER-1134; SER-1142 AND SER-1179</scope>
    <scope>IDENTIFICATION BY MASS SPECTROMETRY [LARGE SCALE ANALYSIS]</scope>
    <source>
        <tissue>Brain</tissue>
        <tissue>Brown adipose tissue</tissue>
        <tissue>Heart</tissue>
        <tissue>Kidney</tissue>
        <tissue>Liver</tissue>
        <tissue>Lung</tissue>
        <tissue>Pancreas</tissue>
        <tissue>Spleen</tissue>
        <tissue>Testis</tissue>
    </source>
</reference>
<reference key="12">
    <citation type="journal article" date="2010" name="J. Immunol.">
        <title>Neutrophil functions and autoimmune arthritis in the absence of p190RhoGAP: generation and analysis of a novel null mutation in mice.</title>
        <authorList>
            <person name="Nemeth T."/>
            <person name="Futosi K."/>
            <person name="Hably C."/>
            <person name="Brouns M.R."/>
            <person name="Jakob S.M."/>
            <person name="Kovacs M."/>
            <person name="Kertesz Z."/>
            <person name="Walzog B."/>
            <person name="Settleman J."/>
            <person name="Mocsai A."/>
        </authorList>
    </citation>
    <scope>TISSUE SPECIFICITY</scope>
    <scope>DISRUPTION PHENOTYPE</scope>
</reference>
<reference key="13">
    <citation type="journal article" date="2011" name="Dev. Biol.">
        <title>P190A RhoGAP is required for mammary gland development.</title>
        <authorList>
            <person name="Heckman-Stoddard B.M."/>
            <person name="Vargo-Gogola T."/>
            <person name="Herrick M.P."/>
            <person name="Visbal A.P."/>
            <person name="Lewis M.T."/>
            <person name="Settleman J."/>
            <person name="Rosen J.M."/>
        </authorList>
    </citation>
    <scope>FUNCTION</scope>
    <scope>DEVELOPMENTAL STAGE</scope>
</reference>
<reference key="14">
    <citation type="journal article" date="2016" name="PLoS Genet.">
        <title>A point mutation in p190A RhoGAP affects ciliogenesis and leads to glomerulocystic kidney defects.</title>
        <authorList>
            <person name="Stewart K."/>
            <person name="Gaitan Y."/>
            <person name="Shafer M.E."/>
            <person name="Aoudjit L."/>
            <person name="Hu D."/>
            <person name="Sharma R."/>
            <person name="Tremblay M."/>
            <person name="Ishii H."/>
            <person name="Marcotte M."/>
            <person name="Stanga D."/>
            <person name="Tang Y.C."/>
            <person name="Boualia S.K."/>
            <person name="Nguyen A.H."/>
            <person name="Takano T."/>
            <person name="Lamarche-Vane N."/>
            <person name="Vidal S."/>
            <person name="Bouchard M."/>
        </authorList>
    </citation>
    <scope>FUNCTION</scope>
    <scope>TISSUE SPECIFICITY</scope>
    <scope>DEVELOPMENTAL STAGE</scope>
    <scope>SUBCELLULAR LOCATION</scope>
    <scope>MUTAGENESIS OF LEU-1396</scope>
</reference>
<organism>
    <name type="scientific">Mus musculus</name>
    <name type="common">Mouse</name>
    <dbReference type="NCBI Taxonomy" id="10090"/>
    <lineage>
        <taxon>Eukaryota</taxon>
        <taxon>Metazoa</taxon>
        <taxon>Chordata</taxon>
        <taxon>Craniata</taxon>
        <taxon>Vertebrata</taxon>
        <taxon>Euteleostomi</taxon>
        <taxon>Mammalia</taxon>
        <taxon>Eutheria</taxon>
        <taxon>Euarchontoglires</taxon>
        <taxon>Glires</taxon>
        <taxon>Rodentia</taxon>
        <taxon>Myomorpha</taxon>
        <taxon>Muroidea</taxon>
        <taxon>Muridae</taxon>
        <taxon>Murinae</taxon>
        <taxon>Mus</taxon>
        <taxon>Mus</taxon>
    </lineage>
</organism>
<dbReference type="EMBL" id="AK147326">
    <property type="protein sequence ID" value="BAE27848.1"/>
    <property type="molecule type" value="mRNA"/>
</dbReference>
<dbReference type="EMBL" id="AK147688">
    <property type="protein sequence ID" value="BAE28076.1"/>
    <property type="molecule type" value="mRNA"/>
</dbReference>
<dbReference type="EMBL" id="AK173242">
    <property type="protein sequence ID" value="BAD32520.1"/>
    <property type="molecule type" value="Transcribed_RNA"/>
</dbReference>
<dbReference type="CCDS" id="CCDS20851.1"/>
<dbReference type="RefSeq" id="NP_766327.3">
    <property type="nucleotide sequence ID" value="NM_172739.4"/>
</dbReference>
<dbReference type="RefSeq" id="XP_006539872.1">
    <property type="nucleotide sequence ID" value="XM_006539809.5"/>
</dbReference>
<dbReference type="RefSeq" id="XP_011248814.1">
    <property type="nucleotide sequence ID" value="XM_011250512.4"/>
</dbReference>
<dbReference type="RefSeq" id="XP_036008838.1">
    <property type="nucleotide sequence ID" value="XM_036152945.1"/>
</dbReference>
<dbReference type="BMRB" id="Q91YM2"/>
<dbReference type="SMR" id="Q91YM2"/>
<dbReference type="BioGRID" id="231317">
    <property type="interactions" value="31"/>
</dbReference>
<dbReference type="CORUM" id="Q91YM2"/>
<dbReference type="FunCoup" id="Q91YM2">
    <property type="interactions" value="1002"/>
</dbReference>
<dbReference type="IntAct" id="Q91YM2">
    <property type="interactions" value="1"/>
</dbReference>
<dbReference type="STRING" id="10090.ENSMUSP00000075242"/>
<dbReference type="ChEMBL" id="CHEMBL4879499"/>
<dbReference type="GlyGen" id="Q91YM2">
    <property type="glycosylation" value="5 sites, 2 N-linked glycans (2 sites), 1 O-linked glycan (1 site)"/>
</dbReference>
<dbReference type="iPTMnet" id="Q91YM2"/>
<dbReference type="PhosphoSitePlus" id="Q91YM2"/>
<dbReference type="SwissPalm" id="Q91YM2"/>
<dbReference type="jPOST" id="Q91YM2"/>
<dbReference type="PaxDb" id="10090-ENSMUSP00000075242"/>
<dbReference type="ProteomicsDB" id="254968"/>
<dbReference type="Pumba" id="Q91YM2"/>
<dbReference type="Antibodypedia" id="31509">
    <property type="antibodies" value="269 antibodies from 29 providers"/>
</dbReference>
<dbReference type="Ensembl" id="ENSMUST00000075845.11">
    <property type="protein sequence ID" value="ENSMUSP00000075242.5"/>
    <property type="gene ID" value="ENSMUSG00000058230.14"/>
</dbReference>
<dbReference type="GeneID" id="232906"/>
<dbReference type="KEGG" id="mmu:232906"/>
<dbReference type="UCSC" id="uc009fhw.1">
    <property type="organism name" value="mouse"/>
</dbReference>
<dbReference type="AGR" id="MGI:1929494"/>
<dbReference type="CTD" id="2909"/>
<dbReference type="MGI" id="MGI:1929494">
    <property type="gene designation" value="Arhgap35"/>
</dbReference>
<dbReference type="VEuPathDB" id="HostDB:ENSMUSG00000058230"/>
<dbReference type="eggNOG" id="KOG4271">
    <property type="taxonomic scope" value="Eukaryota"/>
</dbReference>
<dbReference type="GeneTree" id="ENSGT01030000234635"/>
<dbReference type="HOGENOM" id="CLU_004268_0_0_1"/>
<dbReference type="InParanoid" id="Q91YM2"/>
<dbReference type="OMA" id="PSCPACI"/>
<dbReference type="OrthoDB" id="9994905at2759"/>
<dbReference type="PhylomeDB" id="Q91YM2"/>
<dbReference type="TreeFam" id="TF324451"/>
<dbReference type="Reactome" id="R-MMU-416550">
    <property type="pathway name" value="Sema4D mediated inhibition of cell attachment and migration"/>
</dbReference>
<dbReference type="Reactome" id="R-MMU-8849471">
    <property type="pathway name" value="PTK6 Regulates RHO GTPases, RAS GTPase and MAP kinases"/>
</dbReference>
<dbReference type="Reactome" id="R-MMU-8980692">
    <property type="pathway name" value="RHOA GTPase cycle"/>
</dbReference>
<dbReference type="Reactome" id="R-MMU-9013026">
    <property type="pathway name" value="RHOB GTPase cycle"/>
</dbReference>
<dbReference type="Reactome" id="R-MMU-9013106">
    <property type="pathway name" value="RHOC GTPase cycle"/>
</dbReference>
<dbReference type="Reactome" id="R-MMU-9013148">
    <property type="pathway name" value="CDC42 GTPase cycle"/>
</dbReference>
<dbReference type="Reactome" id="R-MMU-9013149">
    <property type="pathway name" value="RAC1 GTPase cycle"/>
</dbReference>
<dbReference type="Reactome" id="R-MMU-9013404">
    <property type="pathway name" value="RAC2 GTPase cycle"/>
</dbReference>
<dbReference type="Reactome" id="R-MMU-9013405">
    <property type="pathway name" value="RHOD GTPase cycle"/>
</dbReference>
<dbReference type="Reactome" id="R-MMU-9013406">
    <property type="pathway name" value="RHOQ GTPase cycle"/>
</dbReference>
<dbReference type="Reactome" id="R-MMU-9013408">
    <property type="pathway name" value="RHOG GTPase cycle"/>
</dbReference>
<dbReference type="Reactome" id="R-MMU-9013409">
    <property type="pathway name" value="RHOJ GTPase cycle"/>
</dbReference>
<dbReference type="Reactome" id="R-MMU-9013423">
    <property type="pathway name" value="RAC3 GTPase cycle"/>
</dbReference>
<dbReference type="Reactome" id="R-MMU-9696264">
    <property type="pathway name" value="RND3 GTPase cycle"/>
</dbReference>
<dbReference type="Reactome" id="R-MMU-9696270">
    <property type="pathway name" value="RND2 GTPase cycle"/>
</dbReference>
<dbReference type="Reactome" id="R-MMU-9696273">
    <property type="pathway name" value="RND1 GTPase cycle"/>
</dbReference>
<dbReference type="BioGRID-ORCS" id="232906">
    <property type="hits" value="2 hits in 81 CRISPR screens"/>
</dbReference>
<dbReference type="ChiTaRS" id="Arhgap35">
    <property type="organism name" value="mouse"/>
</dbReference>
<dbReference type="PRO" id="PR:Q91YM2"/>
<dbReference type="Proteomes" id="UP000000589">
    <property type="component" value="Chromosome 7"/>
</dbReference>
<dbReference type="RNAct" id="Q91YM2">
    <property type="molecule type" value="protein"/>
</dbReference>
<dbReference type="Bgee" id="ENSMUSG00000058230">
    <property type="expression patterns" value="Expressed in saccule of membranous labyrinth and 260 other cell types or tissues"/>
</dbReference>
<dbReference type="ExpressionAtlas" id="Q91YM2">
    <property type="expression patterns" value="baseline and differential"/>
</dbReference>
<dbReference type="GO" id="GO:0015629">
    <property type="term" value="C:actin cytoskeleton"/>
    <property type="evidence" value="ECO:0000314"/>
    <property type="project" value="MGI"/>
</dbReference>
<dbReference type="GO" id="GO:0036064">
    <property type="term" value="C:ciliary basal body"/>
    <property type="evidence" value="ECO:0000314"/>
    <property type="project" value="UniProtKB"/>
</dbReference>
<dbReference type="GO" id="GO:0005737">
    <property type="term" value="C:cytoplasm"/>
    <property type="evidence" value="ECO:0000314"/>
    <property type="project" value="MGI"/>
</dbReference>
<dbReference type="GO" id="GO:0005634">
    <property type="term" value="C:nucleus"/>
    <property type="evidence" value="ECO:0007669"/>
    <property type="project" value="UniProtKB-SubCell"/>
</dbReference>
<dbReference type="GO" id="GO:0005886">
    <property type="term" value="C:plasma membrane"/>
    <property type="evidence" value="ECO:0007669"/>
    <property type="project" value="UniProtKB-SubCell"/>
</dbReference>
<dbReference type="GO" id="GO:0003677">
    <property type="term" value="F:DNA binding"/>
    <property type="evidence" value="ECO:0007669"/>
    <property type="project" value="UniProtKB-KW"/>
</dbReference>
<dbReference type="GO" id="GO:0005525">
    <property type="term" value="F:GTP binding"/>
    <property type="evidence" value="ECO:0007669"/>
    <property type="project" value="UniProtKB-KW"/>
</dbReference>
<dbReference type="GO" id="GO:0032794">
    <property type="term" value="F:GTPase activating protein binding"/>
    <property type="evidence" value="ECO:0007669"/>
    <property type="project" value="Ensembl"/>
</dbReference>
<dbReference type="GO" id="GO:0005096">
    <property type="term" value="F:GTPase activator activity"/>
    <property type="evidence" value="ECO:0000314"/>
    <property type="project" value="UniProtKB"/>
</dbReference>
<dbReference type="GO" id="GO:0003924">
    <property type="term" value="F:GTPase activity"/>
    <property type="evidence" value="ECO:0007669"/>
    <property type="project" value="InterPro"/>
</dbReference>
<dbReference type="GO" id="GO:0005543">
    <property type="term" value="F:phospholipid binding"/>
    <property type="evidence" value="ECO:0000250"/>
    <property type="project" value="UniProtKB"/>
</dbReference>
<dbReference type="GO" id="GO:0044877">
    <property type="term" value="F:protein-containing complex binding"/>
    <property type="evidence" value="ECO:0007669"/>
    <property type="project" value="Ensembl"/>
</dbReference>
<dbReference type="GO" id="GO:0007411">
    <property type="term" value="P:axon guidance"/>
    <property type="evidence" value="ECO:0000314"/>
    <property type="project" value="UniProtKB"/>
</dbReference>
<dbReference type="GO" id="GO:0007413">
    <property type="term" value="P:axonal fasciculation"/>
    <property type="evidence" value="ECO:0000315"/>
    <property type="project" value="UniProtKB"/>
</dbReference>
<dbReference type="GO" id="GO:0043010">
    <property type="term" value="P:camera-type eye development"/>
    <property type="evidence" value="ECO:0000315"/>
    <property type="project" value="MGI"/>
</dbReference>
<dbReference type="GO" id="GO:0016477">
    <property type="term" value="P:cell migration"/>
    <property type="evidence" value="ECO:0000315"/>
    <property type="project" value="UniProtKB"/>
</dbReference>
<dbReference type="GO" id="GO:0021955">
    <property type="term" value="P:central nervous system neuron axonogenesis"/>
    <property type="evidence" value="ECO:0000315"/>
    <property type="project" value="UniProtKB"/>
</dbReference>
<dbReference type="GO" id="GO:0030950">
    <property type="term" value="P:establishment or maintenance of actin cytoskeleton polarity"/>
    <property type="evidence" value="ECO:0000315"/>
    <property type="project" value="UniProtKB"/>
</dbReference>
<dbReference type="GO" id="GO:0030900">
    <property type="term" value="P:forebrain development"/>
    <property type="evidence" value="ECO:0000315"/>
    <property type="project" value="MGI"/>
</dbReference>
<dbReference type="GO" id="GO:0007229">
    <property type="term" value="P:integrin-mediated signaling pathway"/>
    <property type="evidence" value="ECO:0000304"/>
    <property type="project" value="MGI"/>
</dbReference>
<dbReference type="GO" id="GO:0030879">
    <property type="term" value="P:mammary gland development"/>
    <property type="evidence" value="ECO:0000315"/>
    <property type="project" value="UniProtKB"/>
</dbReference>
<dbReference type="GO" id="GO:0035024">
    <property type="term" value="P:negative regulation of Rho protein signal transduction"/>
    <property type="evidence" value="ECO:0000314"/>
    <property type="project" value="MGI"/>
</dbReference>
<dbReference type="GO" id="GO:0043116">
    <property type="term" value="P:negative regulation of vascular permeability"/>
    <property type="evidence" value="ECO:0000315"/>
    <property type="project" value="MGI"/>
</dbReference>
<dbReference type="GO" id="GO:0001843">
    <property type="term" value="P:neural tube closure"/>
    <property type="evidence" value="ECO:0000315"/>
    <property type="project" value="MGI"/>
</dbReference>
<dbReference type="GO" id="GO:0097485">
    <property type="term" value="P:neuron projection guidance"/>
    <property type="evidence" value="ECO:0000315"/>
    <property type="project" value="UniProtKB"/>
</dbReference>
<dbReference type="GO" id="GO:0045724">
    <property type="term" value="P:positive regulation of cilium assembly"/>
    <property type="evidence" value="ECO:0000315"/>
    <property type="project" value="UniProtKB"/>
</dbReference>
<dbReference type="GO" id="GO:0043547">
    <property type="term" value="P:positive regulation of GTPase activity"/>
    <property type="evidence" value="ECO:0000250"/>
    <property type="project" value="UniProtKB"/>
</dbReference>
<dbReference type="GO" id="GO:0010976">
    <property type="term" value="P:positive regulation of neuron projection development"/>
    <property type="evidence" value="ECO:0000315"/>
    <property type="project" value="UniProtKB"/>
</dbReference>
<dbReference type="GO" id="GO:0032956">
    <property type="term" value="P:regulation of actin cytoskeleton organization"/>
    <property type="evidence" value="ECO:0000315"/>
    <property type="project" value="UniProtKB"/>
</dbReference>
<dbReference type="GO" id="GO:0008064">
    <property type="term" value="P:regulation of actin polymerization or depolymerization"/>
    <property type="evidence" value="ECO:0000315"/>
    <property type="project" value="UniProtKB"/>
</dbReference>
<dbReference type="GO" id="GO:0050770">
    <property type="term" value="P:regulation of axonogenesis"/>
    <property type="evidence" value="ECO:0000315"/>
    <property type="project" value="UniProtKB"/>
</dbReference>
<dbReference type="GO" id="GO:0008360">
    <property type="term" value="P:regulation of cell shape"/>
    <property type="evidence" value="ECO:0000314"/>
    <property type="project" value="MGI"/>
</dbReference>
<dbReference type="GO" id="GO:0007266">
    <property type="term" value="P:Rho protein signal transduction"/>
    <property type="evidence" value="ECO:0000316"/>
    <property type="project" value="MGI"/>
</dbReference>
<dbReference type="GO" id="GO:0044319">
    <property type="term" value="P:wound healing, spreading of cells"/>
    <property type="evidence" value="ECO:0000315"/>
    <property type="project" value="UniProtKB"/>
</dbReference>
<dbReference type="CDD" id="cd22221">
    <property type="entry name" value="pseudoGTPaseD_p190RhoGAP-A"/>
    <property type="match status" value="1"/>
</dbReference>
<dbReference type="CDD" id="cd04373">
    <property type="entry name" value="RhoGAP_p190"/>
    <property type="match status" value="1"/>
</dbReference>
<dbReference type="FunFam" id="1.10.10.440:FF:000007">
    <property type="entry name" value="Putative rho GTPase-activating protein 5"/>
    <property type="match status" value="1"/>
</dbReference>
<dbReference type="FunFam" id="1.10.10.440:FF:000017">
    <property type="entry name" value="Rho GTPase activating protein 35"/>
    <property type="match status" value="1"/>
</dbReference>
<dbReference type="FunFam" id="3.40.50.300:FF:000349">
    <property type="entry name" value="Rho GTPase-activating protein 5"/>
    <property type="match status" value="1"/>
</dbReference>
<dbReference type="FunFam" id="1.10.555.10:FF:000021">
    <property type="entry name" value="rho GTPase-activating protein 5"/>
    <property type="match status" value="1"/>
</dbReference>
<dbReference type="Gene3D" id="1.10.10.440">
    <property type="entry name" value="FF domain"/>
    <property type="match status" value="2"/>
</dbReference>
<dbReference type="Gene3D" id="3.40.50.300">
    <property type="entry name" value="P-loop containing nucleotide triphosphate hydrolases"/>
    <property type="match status" value="1"/>
</dbReference>
<dbReference type="Gene3D" id="1.10.555.10">
    <property type="entry name" value="Rho GTPase activation protein"/>
    <property type="match status" value="1"/>
</dbReference>
<dbReference type="InterPro" id="IPR002713">
    <property type="entry name" value="FF_domain"/>
</dbReference>
<dbReference type="InterPro" id="IPR036517">
    <property type="entry name" value="FF_domain_sf"/>
</dbReference>
<dbReference type="InterPro" id="IPR027417">
    <property type="entry name" value="P-loop_NTPase"/>
</dbReference>
<dbReference type="InterPro" id="IPR039007">
    <property type="entry name" value="pG1"/>
</dbReference>
<dbReference type="InterPro" id="IPR051978">
    <property type="entry name" value="Rho-GAP_domain"/>
</dbReference>
<dbReference type="InterPro" id="IPR008936">
    <property type="entry name" value="Rho_GTPase_activation_prot"/>
</dbReference>
<dbReference type="InterPro" id="IPR032835">
    <property type="entry name" value="RhoGAP-FF1"/>
</dbReference>
<dbReference type="InterPro" id="IPR000198">
    <property type="entry name" value="RhoGAP_dom"/>
</dbReference>
<dbReference type="InterPro" id="IPR045786">
    <property type="entry name" value="RhoGAP_pG1_pG2"/>
</dbReference>
<dbReference type="InterPro" id="IPR039006">
    <property type="entry name" value="RhoGAP_pG2"/>
</dbReference>
<dbReference type="InterPro" id="IPR001806">
    <property type="entry name" value="Small_GTPase"/>
</dbReference>
<dbReference type="PANTHER" id="PTHR46005">
    <property type="entry name" value="RHO GTPASE-ACTIVATING PROTEIN 190"/>
    <property type="match status" value="1"/>
</dbReference>
<dbReference type="PANTHER" id="PTHR46005:SF1">
    <property type="entry name" value="RHO GTPASE-ACTIVATING PROTEIN 35"/>
    <property type="match status" value="1"/>
</dbReference>
<dbReference type="Pfam" id="PF23083">
    <property type="entry name" value="FF_RHG35_4th"/>
    <property type="match status" value="1"/>
</dbReference>
<dbReference type="Pfam" id="PF00071">
    <property type="entry name" value="Ras"/>
    <property type="match status" value="1"/>
</dbReference>
<dbReference type="Pfam" id="PF00620">
    <property type="entry name" value="RhoGAP"/>
    <property type="match status" value="1"/>
</dbReference>
<dbReference type="Pfam" id="PF16512">
    <property type="entry name" value="RhoGAP-FF1"/>
    <property type="match status" value="1"/>
</dbReference>
<dbReference type="Pfam" id="PF19518">
    <property type="entry name" value="RhoGAP_pG1_pG2"/>
    <property type="match status" value="1"/>
</dbReference>
<dbReference type="SMART" id="SM00441">
    <property type="entry name" value="FF"/>
    <property type="match status" value="4"/>
</dbReference>
<dbReference type="SMART" id="SM00324">
    <property type="entry name" value="RhoGAP"/>
    <property type="match status" value="1"/>
</dbReference>
<dbReference type="SUPFAM" id="SSF81698">
    <property type="entry name" value="FF domain"/>
    <property type="match status" value="1"/>
</dbReference>
<dbReference type="SUPFAM" id="SSF48350">
    <property type="entry name" value="GTPase activation domain, GAP"/>
    <property type="match status" value="1"/>
</dbReference>
<dbReference type="SUPFAM" id="SSF52540">
    <property type="entry name" value="P-loop containing nucleoside triphosphate hydrolases"/>
    <property type="match status" value="1"/>
</dbReference>
<dbReference type="PROSITE" id="PS51676">
    <property type="entry name" value="FF"/>
    <property type="match status" value="4"/>
</dbReference>
<dbReference type="PROSITE" id="PS51852">
    <property type="entry name" value="PG1"/>
    <property type="match status" value="1"/>
</dbReference>
<dbReference type="PROSITE" id="PS51853">
    <property type="entry name" value="PG2"/>
    <property type="match status" value="1"/>
</dbReference>
<dbReference type="PROSITE" id="PS50238">
    <property type="entry name" value="RHOGAP"/>
    <property type="match status" value="1"/>
</dbReference>
<evidence type="ECO:0000250" key="1"/>
<evidence type="ECO:0000250" key="2">
    <source>
        <dbReference type="UniProtKB" id="P81128"/>
    </source>
</evidence>
<evidence type="ECO:0000250" key="3">
    <source>
        <dbReference type="UniProtKB" id="Q6NU25"/>
    </source>
</evidence>
<evidence type="ECO:0000250" key="4">
    <source>
        <dbReference type="UniProtKB" id="Q9NRY4"/>
    </source>
</evidence>
<evidence type="ECO:0000255" key="5">
    <source>
        <dbReference type="PROSITE-ProRule" id="PRU00172"/>
    </source>
</evidence>
<evidence type="ECO:0000255" key="6">
    <source>
        <dbReference type="PROSITE-ProRule" id="PRU01199"/>
    </source>
</evidence>
<evidence type="ECO:0000255" key="7">
    <source>
        <dbReference type="PROSITE-ProRule" id="PRU01200"/>
    </source>
</evidence>
<evidence type="ECO:0000256" key="8">
    <source>
        <dbReference type="SAM" id="MobiDB-lite"/>
    </source>
</evidence>
<evidence type="ECO:0000269" key="9">
    <source>
    </source>
</evidence>
<evidence type="ECO:0000269" key="10">
    <source>
    </source>
</evidence>
<evidence type="ECO:0000269" key="11">
    <source>
    </source>
</evidence>
<evidence type="ECO:0000269" key="12">
    <source>
    </source>
</evidence>
<evidence type="ECO:0000269" key="13">
    <source>
    </source>
</evidence>
<evidence type="ECO:0000269" key="14">
    <source>
    </source>
</evidence>
<evidence type="ECO:0000269" key="15">
    <source>
    </source>
</evidence>
<evidence type="ECO:0000303" key="16">
    <source>
    </source>
</evidence>
<evidence type="ECO:0000305" key="17"/>
<evidence type="ECO:0000312" key="18">
    <source>
        <dbReference type="MGI" id="MGI:1929494"/>
    </source>
</evidence>
<evidence type="ECO:0007744" key="19">
    <source>
    </source>
</evidence>
<evidence type="ECO:0007744" key="20">
    <source>
    </source>
</evidence>
<evidence type="ECO:0007744" key="21">
    <source>
    </source>
</evidence>
<name>RHG35_MOUSE</name>